<proteinExistence type="evidence at protein level"/>
<keyword id="KW-0002">3D-structure</keyword>
<keyword id="KW-0963">Cytoplasm</keyword>
<keyword id="KW-0378">Hydrolase</keyword>
<keyword id="KW-0539">Nucleus</keyword>
<keyword id="KW-0645">Protease</keyword>
<keyword id="KW-0647">Proteasome</keyword>
<keyword id="KW-1185">Reference proteome</keyword>
<keyword id="KW-0888">Threonine protease</keyword>
<keyword id="KW-0865">Zymogen</keyword>
<name>PSB7_BOVIN</name>
<evidence type="ECO:0000250" key="1"/>
<evidence type="ECO:0000250" key="2">
    <source>
        <dbReference type="UniProtKB" id="Q99436"/>
    </source>
</evidence>
<evidence type="ECO:0000255" key="3">
    <source>
        <dbReference type="PROSITE-ProRule" id="PRU00809"/>
    </source>
</evidence>
<evidence type="ECO:0000269" key="4">
    <source>
    </source>
</evidence>
<evidence type="ECO:0007829" key="5">
    <source>
        <dbReference type="PDB" id="8FZ5"/>
    </source>
</evidence>
<comment type="function">
    <text evidence="2">Component of the 20S core proteasome complex involved in the proteolytic degradation of most intracellular proteins. This complex plays numerous essential roles within the cell by associating with different regulatory particles. Associated with two 19S regulatory particles, forms the 26S proteasome and thus participates in the ATP-dependent degradation of ubiquitinated proteins. The 26S proteasome plays a key role in the maintenance of protein homeostasis by removing misfolded or damaged proteins that could impair cellular functions, and by removing proteins whose functions are no longer required. Associated with the PA200 or PA28, the 20S proteasome mediates ubiquitin-independent protein degradation. This type of proteolysis is required in several pathways including spermatogenesis (20S-PA200 complex) or generation of a subset of MHC class I-presented antigenic peptides (20S-PA28 complex). Within the 20S core complex, PSMB7 displays a trypsin-like activity.</text>
</comment>
<comment type="catalytic activity">
    <reaction evidence="2">
        <text>Cleavage of peptide bonds with very broad specificity.</text>
        <dbReference type="EC" id="3.4.25.1"/>
    </reaction>
</comment>
<comment type="subunit">
    <text evidence="4">The 26S proteasome consists of a 20S proteasome core and two 19S regulatory subunits. The 20S proteasome core is a barrel-shaped complex made of 28 subunits that are arranged in four stacked rings. The two outer rings are each formed by seven alpha subunits, and the two inner rings are formed by seven beta subunits. The proteolytic activity is exerted by three beta-subunits PSMB5, PSMB6 and PSMB7.</text>
</comment>
<comment type="subcellular location">
    <subcellularLocation>
        <location evidence="2">Cytoplasm</location>
    </subcellularLocation>
    <subcellularLocation>
        <location evidence="2">Nucleus</location>
    </subcellularLocation>
    <text evidence="2">Translocated from the cytoplasm into the nucleus following interaction with AKIRIN2, which bridges the proteasome with the nuclear import receptor IPO9.</text>
</comment>
<comment type="similarity">
    <text evidence="3">Belongs to the peptidase T1B family.</text>
</comment>
<reference key="1">
    <citation type="submission" date="2005-11" db="EMBL/GenBank/DDBJ databases">
        <authorList>
            <consortium name="NIH - Mammalian Gene Collection (MGC) project"/>
        </authorList>
    </citation>
    <scope>NUCLEOTIDE SEQUENCE [LARGE SCALE MRNA]</scope>
    <source>
        <strain>Crossbred X Angus</strain>
        <tissue>Liver</tissue>
    </source>
</reference>
<reference key="2">
    <citation type="journal article" date="2002" name="Structure">
        <title>The structure of the mammalian 20S proteasome at 2.75 A resolution.</title>
        <authorList>
            <person name="Unno M."/>
            <person name="Mizushima T."/>
            <person name="Morimoto Y."/>
            <person name="Tomisugi Y."/>
            <person name="Tanaka K."/>
            <person name="Yasuoka N."/>
            <person name="Tsukihara T."/>
        </authorList>
    </citation>
    <scope>X-RAY CRYSTALLOGRAPHY (2.75 ANGSTROMS) OF 44-277 OF COMPLEX WITH 20S PROTEASOME</scope>
</reference>
<dbReference type="EC" id="3.4.25.1"/>
<dbReference type="EMBL" id="BC109868">
    <property type="protein sequence ID" value="AAI09869.1"/>
    <property type="molecule type" value="mRNA"/>
</dbReference>
<dbReference type="RefSeq" id="NP_001033616.1">
    <property type="nucleotide sequence ID" value="NM_001038527.2"/>
</dbReference>
<dbReference type="PDB" id="1IRU">
    <property type="method" value="X-ray"/>
    <property type="resolution" value="2.75 A"/>
    <property type="chains" value="I/W=44-277"/>
</dbReference>
<dbReference type="PDB" id="8AZK">
    <property type="method" value="EM"/>
    <property type="resolution" value="3.10 A"/>
    <property type="chains" value="I/W=44-277"/>
</dbReference>
<dbReference type="PDB" id="8FZ5">
    <property type="method" value="EM"/>
    <property type="resolution" value="2.23 A"/>
    <property type="chains" value="I/W=1-277"/>
</dbReference>
<dbReference type="PDB" id="8FZ6">
    <property type="method" value="EM"/>
    <property type="resolution" value="2.54 A"/>
    <property type="chains" value="I/W=1-277"/>
</dbReference>
<dbReference type="PDBsum" id="1IRU"/>
<dbReference type="PDBsum" id="8AZK"/>
<dbReference type="PDBsum" id="8FZ5"/>
<dbReference type="PDBsum" id="8FZ6"/>
<dbReference type="EMDB" id="EMD-15767"/>
<dbReference type="EMDB" id="EMD-29603"/>
<dbReference type="EMDB" id="EMD-29604"/>
<dbReference type="SMR" id="Q2TBP0"/>
<dbReference type="FunCoup" id="Q2TBP0">
    <property type="interactions" value="3483"/>
</dbReference>
<dbReference type="STRING" id="9913.ENSBTAP00000003990"/>
<dbReference type="MEROPS" id="T01.A02"/>
<dbReference type="PaxDb" id="9913-ENSBTAP00000003990"/>
<dbReference type="GeneID" id="511207"/>
<dbReference type="KEGG" id="bta:511207"/>
<dbReference type="CTD" id="5695"/>
<dbReference type="eggNOG" id="KOG0173">
    <property type="taxonomic scope" value="Eukaryota"/>
</dbReference>
<dbReference type="InParanoid" id="Q2TBP0"/>
<dbReference type="OrthoDB" id="429533at2759"/>
<dbReference type="EvolutionaryTrace" id="Q2TBP0"/>
<dbReference type="Proteomes" id="UP000009136">
    <property type="component" value="Unplaced"/>
</dbReference>
<dbReference type="GO" id="GO:0005737">
    <property type="term" value="C:cytoplasm"/>
    <property type="evidence" value="ECO:0000318"/>
    <property type="project" value="GO_Central"/>
</dbReference>
<dbReference type="GO" id="GO:0005829">
    <property type="term" value="C:cytosol"/>
    <property type="evidence" value="ECO:0000304"/>
    <property type="project" value="Reactome"/>
</dbReference>
<dbReference type="GO" id="GO:0005634">
    <property type="term" value="C:nucleus"/>
    <property type="evidence" value="ECO:0007669"/>
    <property type="project" value="UniProtKB-SubCell"/>
</dbReference>
<dbReference type="GO" id="GO:0005839">
    <property type="term" value="C:proteasome core complex"/>
    <property type="evidence" value="ECO:0000250"/>
    <property type="project" value="UniProtKB"/>
</dbReference>
<dbReference type="GO" id="GO:0019774">
    <property type="term" value="C:proteasome core complex, beta-subunit complex"/>
    <property type="evidence" value="ECO:0000250"/>
    <property type="project" value="UniProtKB"/>
</dbReference>
<dbReference type="GO" id="GO:0004298">
    <property type="term" value="F:threonine-type endopeptidase activity"/>
    <property type="evidence" value="ECO:0007669"/>
    <property type="project" value="UniProtKB-KW"/>
</dbReference>
<dbReference type="GO" id="GO:0051603">
    <property type="term" value="P:proteolysis involved in protein catabolic process"/>
    <property type="evidence" value="ECO:0000318"/>
    <property type="project" value="GO_Central"/>
</dbReference>
<dbReference type="CDD" id="cd03763">
    <property type="entry name" value="proteasome_beta_type_7"/>
    <property type="match status" value="1"/>
</dbReference>
<dbReference type="FunFam" id="3.60.20.10:FF:000005">
    <property type="entry name" value="Proteasome subunit beta type-2"/>
    <property type="match status" value="1"/>
</dbReference>
<dbReference type="Gene3D" id="3.60.20.10">
    <property type="entry name" value="Glutamine Phosphoribosylpyrophosphate, subunit 1, domain 1"/>
    <property type="match status" value="1"/>
</dbReference>
<dbReference type="InterPro" id="IPR029055">
    <property type="entry name" value="Ntn_hydrolases_N"/>
</dbReference>
<dbReference type="InterPro" id="IPR000243">
    <property type="entry name" value="Pept_T1A_subB"/>
</dbReference>
<dbReference type="InterPro" id="IPR024689">
    <property type="entry name" value="Proteasome_bsu_C"/>
</dbReference>
<dbReference type="InterPro" id="IPR016050">
    <property type="entry name" value="Proteasome_bsu_CS"/>
</dbReference>
<dbReference type="InterPro" id="IPR001353">
    <property type="entry name" value="Proteasome_sua/b"/>
</dbReference>
<dbReference type="InterPro" id="IPR023333">
    <property type="entry name" value="Proteasome_suB-type"/>
</dbReference>
<dbReference type="PANTHER" id="PTHR32194">
    <property type="entry name" value="METALLOPROTEASE TLDD"/>
    <property type="match status" value="1"/>
</dbReference>
<dbReference type="PANTHER" id="PTHR32194:SF4">
    <property type="entry name" value="PROTEASOME SUBUNIT BETA TYPE-7"/>
    <property type="match status" value="1"/>
</dbReference>
<dbReference type="Pfam" id="PF12465">
    <property type="entry name" value="Pr_beta_C"/>
    <property type="match status" value="1"/>
</dbReference>
<dbReference type="Pfam" id="PF00227">
    <property type="entry name" value="Proteasome"/>
    <property type="match status" value="1"/>
</dbReference>
<dbReference type="PRINTS" id="PR00141">
    <property type="entry name" value="PROTEASOME"/>
</dbReference>
<dbReference type="SUPFAM" id="SSF56235">
    <property type="entry name" value="N-terminal nucleophile aminohydrolases (Ntn hydrolases)"/>
    <property type="match status" value="1"/>
</dbReference>
<dbReference type="PROSITE" id="PS00854">
    <property type="entry name" value="PROTEASOME_BETA_1"/>
    <property type="match status" value="1"/>
</dbReference>
<dbReference type="PROSITE" id="PS51476">
    <property type="entry name" value="PROTEASOME_BETA_2"/>
    <property type="match status" value="1"/>
</dbReference>
<sequence>MAAVSVYERPVGGFSFDNCRRNAVLEADFAKKGYKLPTARKTGTTIAGVVYKDGIVLGADTRATEGMVVADKNCSKIHFISPNIYCCGAGTAADTDMTTQLISSNLELHSLSTGRLPRVVTANRMLKQMLFRYQGYIGAALVLGGVDVTGPHLYSIYPHGSTDKLPYVTMGSGSLAAMAVFEDKFRPDMEEEEAKKLVSEAIAAGIFNDLGSGSNIDLCVISKSKLDFLRPYSVPNKKGTRFGRYRCEKGTNAVLTEKVTTLEIEVLEETVQTMDTS</sequence>
<feature type="propeptide" id="PRO_0000329062" description="Removed in mature form" evidence="1">
    <location>
        <begin position="1"/>
        <end position="43"/>
    </location>
</feature>
<feature type="chain" id="PRO_0000329063" description="Proteasome subunit beta type-7">
    <location>
        <begin position="44"/>
        <end position="277"/>
    </location>
</feature>
<feature type="active site" description="Nucleophile">
    <location>
        <position position="44"/>
    </location>
</feature>
<feature type="strand" evidence="5">
    <location>
        <begin position="45"/>
        <end position="51"/>
    </location>
</feature>
<feature type="strand" evidence="5">
    <location>
        <begin position="54"/>
        <end position="60"/>
    </location>
</feature>
<feature type="strand" evidence="5">
    <location>
        <begin position="63"/>
        <end position="65"/>
    </location>
</feature>
<feature type="strand" evidence="5">
    <location>
        <begin position="68"/>
        <end position="73"/>
    </location>
</feature>
<feature type="strand" evidence="5">
    <location>
        <begin position="77"/>
        <end position="81"/>
    </location>
</feature>
<feature type="strand" evidence="5">
    <location>
        <begin position="84"/>
        <end position="91"/>
    </location>
</feature>
<feature type="helix" evidence="5">
    <location>
        <begin position="92"/>
        <end position="113"/>
    </location>
</feature>
<feature type="helix" evidence="5">
    <location>
        <begin position="119"/>
        <end position="132"/>
    </location>
</feature>
<feature type="turn" evidence="5">
    <location>
        <begin position="133"/>
        <end position="135"/>
    </location>
</feature>
<feature type="strand" evidence="5">
    <location>
        <begin position="139"/>
        <end position="147"/>
    </location>
</feature>
<feature type="strand" evidence="5">
    <location>
        <begin position="150"/>
        <end position="156"/>
    </location>
</feature>
<feature type="strand" evidence="5">
    <location>
        <begin position="162"/>
        <end position="164"/>
    </location>
</feature>
<feature type="strand" evidence="5">
    <location>
        <begin position="166"/>
        <end position="171"/>
    </location>
</feature>
<feature type="helix" evidence="5">
    <location>
        <begin position="174"/>
        <end position="184"/>
    </location>
</feature>
<feature type="helix" evidence="5">
    <location>
        <begin position="191"/>
        <end position="208"/>
    </location>
</feature>
<feature type="strand" evidence="5">
    <location>
        <begin position="216"/>
        <end position="224"/>
    </location>
</feature>
<feature type="strand" evidence="5">
    <location>
        <begin position="226"/>
        <end position="233"/>
    </location>
</feature>
<feature type="strand" evidence="5">
    <location>
        <begin position="254"/>
        <end position="261"/>
    </location>
</feature>
<protein>
    <recommendedName>
        <fullName>Proteasome subunit beta type-7</fullName>
        <ecNumber>3.4.25.1</ecNumber>
    </recommendedName>
</protein>
<gene>
    <name type="primary">PSMB7</name>
</gene>
<accession>Q2TBP0</accession>
<organism>
    <name type="scientific">Bos taurus</name>
    <name type="common">Bovine</name>
    <dbReference type="NCBI Taxonomy" id="9913"/>
    <lineage>
        <taxon>Eukaryota</taxon>
        <taxon>Metazoa</taxon>
        <taxon>Chordata</taxon>
        <taxon>Craniata</taxon>
        <taxon>Vertebrata</taxon>
        <taxon>Euteleostomi</taxon>
        <taxon>Mammalia</taxon>
        <taxon>Eutheria</taxon>
        <taxon>Laurasiatheria</taxon>
        <taxon>Artiodactyla</taxon>
        <taxon>Ruminantia</taxon>
        <taxon>Pecora</taxon>
        <taxon>Bovidae</taxon>
        <taxon>Bovinae</taxon>
        <taxon>Bos</taxon>
    </lineage>
</organism>